<feature type="chain" id="PRO_1000084174" description="Phosphoribosyl-AMP cyclohydrolase">
    <location>
        <begin position="1"/>
        <end position="139"/>
    </location>
</feature>
<feature type="binding site" evidence="1">
    <location>
        <position position="91"/>
    </location>
    <ligand>
        <name>Mg(2+)</name>
        <dbReference type="ChEBI" id="CHEBI:18420"/>
    </ligand>
</feature>
<feature type="binding site" evidence="1">
    <location>
        <position position="92"/>
    </location>
    <ligand>
        <name>Zn(2+)</name>
        <dbReference type="ChEBI" id="CHEBI:29105"/>
        <note>ligand shared between dimeric partners</note>
    </ligand>
</feature>
<feature type="binding site" evidence="1">
    <location>
        <position position="93"/>
    </location>
    <ligand>
        <name>Mg(2+)</name>
        <dbReference type="ChEBI" id="CHEBI:18420"/>
    </ligand>
</feature>
<feature type="binding site" evidence="1">
    <location>
        <position position="95"/>
    </location>
    <ligand>
        <name>Mg(2+)</name>
        <dbReference type="ChEBI" id="CHEBI:18420"/>
    </ligand>
</feature>
<feature type="binding site" evidence="1">
    <location>
        <position position="110"/>
    </location>
    <ligand>
        <name>Zn(2+)</name>
        <dbReference type="ChEBI" id="CHEBI:29105"/>
        <note>ligand shared between dimeric partners</note>
    </ligand>
</feature>
<feature type="binding site" evidence="1">
    <location>
        <position position="117"/>
    </location>
    <ligand>
        <name>Zn(2+)</name>
        <dbReference type="ChEBI" id="CHEBI:29105"/>
        <note>ligand shared between dimeric partners</note>
    </ligand>
</feature>
<dbReference type="EC" id="3.5.4.19" evidence="1"/>
<dbReference type="EMBL" id="CP000872">
    <property type="protein sequence ID" value="ABX62142.1"/>
    <property type="molecule type" value="Genomic_DNA"/>
</dbReference>
<dbReference type="RefSeq" id="WP_004690855.1">
    <property type="nucleotide sequence ID" value="NC_010103.1"/>
</dbReference>
<dbReference type="SMR" id="A9M587"/>
<dbReference type="GeneID" id="55590764"/>
<dbReference type="KEGG" id="bcs:BCAN_A1091"/>
<dbReference type="HOGENOM" id="CLU_048577_5_0_5"/>
<dbReference type="PhylomeDB" id="A9M587"/>
<dbReference type="UniPathway" id="UPA00031">
    <property type="reaction ID" value="UER00008"/>
</dbReference>
<dbReference type="Proteomes" id="UP000001385">
    <property type="component" value="Chromosome I"/>
</dbReference>
<dbReference type="GO" id="GO:0005737">
    <property type="term" value="C:cytoplasm"/>
    <property type="evidence" value="ECO:0007669"/>
    <property type="project" value="UniProtKB-SubCell"/>
</dbReference>
<dbReference type="GO" id="GO:0000287">
    <property type="term" value="F:magnesium ion binding"/>
    <property type="evidence" value="ECO:0007669"/>
    <property type="project" value="UniProtKB-UniRule"/>
</dbReference>
<dbReference type="GO" id="GO:0004635">
    <property type="term" value="F:phosphoribosyl-AMP cyclohydrolase activity"/>
    <property type="evidence" value="ECO:0007669"/>
    <property type="project" value="UniProtKB-UniRule"/>
</dbReference>
<dbReference type="GO" id="GO:0008270">
    <property type="term" value="F:zinc ion binding"/>
    <property type="evidence" value="ECO:0007669"/>
    <property type="project" value="UniProtKB-UniRule"/>
</dbReference>
<dbReference type="GO" id="GO:0000105">
    <property type="term" value="P:L-histidine biosynthetic process"/>
    <property type="evidence" value="ECO:0007669"/>
    <property type="project" value="UniProtKB-UniRule"/>
</dbReference>
<dbReference type="FunFam" id="3.10.20.810:FF:000001">
    <property type="entry name" value="Histidine biosynthesis bifunctional protein HisIE"/>
    <property type="match status" value="1"/>
</dbReference>
<dbReference type="Gene3D" id="4.10.80.70">
    <property type="match status" value="1"/>
</dbReference>
<dbReference type="Gene3D" id="3.10.20.810">
    <property type="entry name" value="Phosphoribosyl-AMP cyclohydrolase"/>
    <property type="match status" value="1"/>
</dbReference>
<dbReference type="HAMAP" id="MF_01021">
    <property type="entry name" value="HisI"/>
    <property type="match status" value="1"/>
</dbReference>
<dbReference type="InterPro" id="IPR026660">
    <property type="entry name" value="PRA-CH"/>
</dbReference>
<dbReference type="InterPro" id="IPR002496">
    <property type="entry name" value="PRib_AMP_CycHydrolase_dom"/>
</dbReference>
<dbReference type="InterPro" id="IPR038019">
    <property type="entry name" value="PRib_AMP_CycHydrolase_sf"/>
</dbReference>
<dbReference type="NCBIfam" id="NF000768">
    <property type="entry name" value="PRK00051.1"/>
    <property type="match status" value="1"/>
</dbReference>
<dbReference type="PANTHER" id="PTHR42945">
    <property type="entry name" value="HISTIDINE BIOSYNTHESIS BIFUNCTIONAL PROTEIN"/>
    <property type="match status" value="1"/>
</dbReference>
<dbReference type="PANTHER" id="PTHR42945:SF1">
    <property type="entry name" value="HISTIDINE BIOSYNTHESIS BIFUNCTIONAL PROTEIN HIS7"/>
    <property type="match status" value="1"/>
</dbReference>
<dbReference type="Pfam" id="PF01502">
    <property type="entry name" value="PRA-CH"/>
    <property type="match status" value="1"/>
</dbReference>
<dbReference type="SUPFAM" id="SSF141734">
    <property type="entry name" value="HisI-like"/>
    <property type="match status" value="1"/>
</dbReference>
<sequence length="139" mass="15308">MSIFPAQPSDKKAVEEGAAFMPRFDASGLITAIVTDARDGELLMVAHMNEEALRLTLETGIAHYWSRSRKTLWKKGETSGNLQSVVELRTDCDQDALWLKVHVAGDGPTCHTGRRSCFYRQVVSSGGKVALTMVSDHDQ</sequence>
<gene>
    <name evidence="1" type="primary">hisI</name>
    <name type="ordered locus">BCAN_A1091</name>
</gene>
<organism>
    <name type="scientific">Brucella canis (strain ATCC 23365 / NCTC 10854 / RM-666)</name>
    <dbReference type="NCBI Taxonomy" id="483179"/>
    <lineage>
        <taxon>Bacteria</taxon>
        <taxon>Pseudomonadati</taxon>
        <taxon>Pseudomonadota</taxon>
        <taxon>Alphaproteobacteria</taxon>
        <taxon>Hyphomicrobiales</taxon>
        <taxon>Brucellaceae</taxon>
        <taxon>Brucella/Ochrobactrum group</taxon>
        <taxon>Brucella</taxon>
    </lineage>
</organism>
<reference key="1">
    <citation type="submission" date="2007-10" db="EMBL/GenBank/DDBJ databases">
        <title>Brucella canis ATCC 23365 whole genome shotgun sequencing project.</title>
        <authorList>
            <person name="Setubal J.C."/>
            <person name="Bowns C."/>
            <person name="Boyle S."/>
            <person name="Crasta O.R."/>
            <person name="Czar M.J."/>
            <person name="Dharmanolla C."/>
            <person name="Gillespie J.J."/>
            <person name="Kenyon R.W."/>
            <person name="Lu J."/>
            <person name="Mane S."/>
            <person name="Mohapatra S."/>
            <person name="Nagrani S."/>
            <person name="Purkayastha A."/>
            <person name="Rajasimha H.K."/>
            <person name="Shallom J.M."/>
            <person name="Shallom S."/>
            <person name="Shukla M."/>
            <person name="Snyder E.E."/>
            <person name="Sobral B.W."/>
            <person name="Wattam A.R."/>
            <person name="Will R."/>
            <person name="Williams K."/>
            <person name="Yoo H."/>
            <person name="Bruce D."/>
            <person name="Detter C."/>
            <person name="Munk C."/>
            <person name="Brettin T.S."/>
        </authorList>
    </citation>
    <scope>NUCLEOTIDE SEQUENCE [LARGE SCALE GENOMIC DNA]</scope>
    <source>
        <strain>ATCC 23365 / NCTC 10854 / RM-666</strain>
    </source>
</reference>
<keyword id="KW-0028">Amino-acid biosynthesis</keyword>
<keyword id="KW-0963">Cytoplasm</keyword>
<keyword id="KW-0368">Histidine biosynthesis</keyword>
<keyword id="KW-0378">Hydrolase</keyword>
<keyword id="KW-0460">Magnesium</keyword>
<keyword id="KW-0479">Metal-binding</keyword>
<keyword id="KW-1185">Reference proteome</keyword>
<keyword id="KW-0862">Zinc</keyword>
<evidence type="ECO:0000255" key="1">
    <source>
        <dbReference type="HAMAP-Rule" id="MF_01021"/>
    </source>
</evidence>
<name>HIS3_BRUC2</name>
<protein>
    <recommendedName>
        <fullName evidence="1">Phosphoribosyl-AMP cyclohydrolase</fullName>
        <shortName evidence="1">PRA-CH</shortName>
        <ecNumber evidence="1">3.5.4.19</ecNumber>
    </recommendedName>
</protein>
<accession>A9M587</accession>
<comment type="function">
    <text evidence="1">Catalyzes the hydrolysis of the adenine ring of phosphoribosyl-AMP.</text>
</comment>
<comment type="catalytic activity">
    <reaction evidence="1">
        <text>1-(5-phospho-beta-D-ribosyl)-5'-AMP + H2O = 1-(5-phospho-beta-D-ribosyl)-5-[(5-phospho-beta-D-ribosylamino)methylideneamino]imidazole-4-carboxamide</text>
        <dbReference type="Rhea" id="RHEA:20049"/>
        <dbReference type="ChEBI" id="CHEBI:15377"/>
        <dbReference type="ChEBI" id="CHEBI:58435"/>
        <dbReference type="ChEBI" id="CHEBI:59457"/>
        <dbReference type="EC" id="3.5.4.19"/>
    </reaction>
</comment>
<comment type="cofactor">
    <cofactor evidence="1">
        <name>Mg(2+)</name>
        <dbReference type="ChEBI" id="CHEBI:18420"/>
    </cofactor>
    <text evidence="1">Binds 1 Mg(2+) ion per subunit.</text>
</comment>
<comment type="cofactor">
    <cofactor evidence="1">
        <name>Zn(2+)</name>
        <dbReference type="ChEBI" id="CHEBI:29105"/>
    </cofactor>
    <text evidence="1">Binds 1 zinc ion per subunit.</text>
</comment>
<comment type="pathway">
    <text evidence="1">Amino-acid biosynthesis; L-histidine biosynthesis; L-histidine from 5-phospho-alpha-D-ribose 1-diphosphate: step 3/9.</text>
</comment>
<comment type="subunit">
    <text evidence="1">Homodimer.</text>
</comment>
<comment type="subcellular location">
    <subcellularLocation>
        <location evidence="1">Cytoplasm</location>
    </subcellularLocation>
</comment>
<comment type="similarity">
    <text evidence="1">Belongs to the PRA-CH family.</text>
</comment>
<proteinExistence type="inferred from homology"/>